<accession>P54300</accession>
<keyword id="KW-0002">3D-structure</keyword>
<keyword id="KW-0574">Periplasm</keyword>
<keyword id="KW-0732">Signal</keyword>
<reference key="1">
    <citation type="submission" date="2001-10" db="EMBL/GenBank/DDBJ databases">
        <authorList>
            <person name="Schauder S."/>
            <person name="Bassler B.L."/>
        </authorList>
    </citation>
    <scope>NUCLEOTIDE SEQUENCE [GENOMIC DNA]</scope>
    <source>
        <strain>BB7</strain>
    </source>
</reference>
<reference key="2">
    <citation type="journal article" date="1994" name="Mol. Microbiol.">
        <title>Multiple signalling systems controlling expression of luminescence in Vibrio harveyi: sequence and function of genes encoding a second sensory pathway.</title>
        <authorList>
            <person name="Bassler B.L."/>
            <person name="Wright M."/>
            <person name="Silverman M.R."/>
        </authorList>
    </citation>
    <scope>NUCLEOTIDE SEQUENCE [GENOMIC DNA] OF 121-365</scope>
    <source>
        <strain>BB7</strain>
    </source>
</reference>
<reference key="3">
    <citation type="journal article" date="2002" name="Nature">
        <title>Structural identification of a bacterial quorum-sensing signal containing boron.</title>
        <authorList>
            <person name="Chen X."/>
            <person name="Schauder S."/>
            <person name="Potier N."/>
            <person name="van Dorsselaer A."/>
            <person name="Pelczer I."/>
            <person name="Bassler B.L."/>
            <person name="Hughson F.M."/>
        </authorList>
    </citation>
    <scope>X-RAY CRYSTALLOGRAPHY (1.5 ANGSTROMS) OF 24-365</scope>
    <scope>FUNCTION</scope>
</reference>
<sequence>MKKALLFSLISMVGFSPASQATQVLNGYWGYQEFLDEFPEQRNLTNALSEAVRAQPVPLSKPTQRPIKISVVYPGQQVSDYWVRNIASFEKRLYKLNINYQLNQVFTRPNADIKQQSLSLMEALKSKSDYLIFTLDTTRHRKFVEHVLDSTNTKLILQNITTPVREWDKHQPFLYVGFDHAEGSRELATEFGKFFPKHTYYSVLYFSEGYISDVRGDTFIHQVNRDNNFELQSAYYTKATKQSGYDAAKASLAKHPDVDFIYACSTDVALGAVDALAELGREDIMINGWGGGSAELDAIQKGDLDITVMRMNDDTGIAMAEAIKWDLEDKPVPTVYSGDFEIVTKADSPERIEALKKRAFRYSDN</sequence>
<dbReference type="EMBL" id="U07069">
    <property type="protein sequence ID" value="AAA20837.2"/>
    <property type="molecule type" value="Genomic_DNA"/>
</dbReference>
<dbReference type="PIR" id="S49045">
    <property type="entry name" value="S49045"/>
</dbReference>
<dbReference type="PDB" id="1JX6">
    <property type="method" value="X-ray"/>
    <property type="resolution" value="1.50 A"/>
    <property type="chains" value="A=24-365"/>
</dbReference>
<dbReference type="PDB" id="1ZHH">
    <property type="method" value="X-ray"/>
    <property type="resolution" value="1.94 A"/>
    <property type="chains" value="A=22-365"/>
</dbReference>
<dbReference type="PDB" id="2HJ9">
    <property type="method" value="X-ray"/>
    <property type="resolution" value="2.34 A"/>
    <property type="chains" value="A/B=27-365"/>
</dbReference>
<dbReference type="PDB" id="4YP9">
    <property type="method" value="X-ray"/>
    <property type="resolution" value="2.70 A"/>
    <property type="chains" value="A/B=24-365"/>
</dbReference>
<dbReference type="PDB" id="4YR7">
    <property type="method" value="X-ray"/>
    <property type="resolution" value="2.53 A"/>
    <property type="chains" value="A/B=24-365"/>
</dbReference>
<dbReference type="PDB" id="4YRZ">
    <property type="method" value="X-ray"/>
    <property type="resolution" value="2.57 A"/>
    <property type="chains" value="A/B=24-365"/>
</dbReference>
<dbReference type="PDBsum" id="1JX6"/>
<dbReference type="PDBsum" id="1ZHH"/>
<dbReference type="PDBsum" id="2HJ9"/>
<dbReference type="PDBsum" id="4YP9"/>
<dbReference type="PDBsum" id="4YR7"/>
<dbReference type="PDBsum" id="4YRZ"/>
<dbReference type="SMR" id="P54300"/>
<dbReference type="IntAct" id="P54300">
    <property type="interactions" value="1"/>
</dbReference>
<dbReference type="STRING" id="669.AL538_22570"/>
<dbReference type="BindingDB" id="P54300"/>
<dbReference type="ChEMBL" id="CHEMBL6100"/>
<dbReference type="EvolutionaryTrace" id="P54300"/>
<dbReference type="GO" id="GO:0042597">
    <property type="term" value="C:periplasmic space"/>
    <property type="evidence" value="ECO:0007669"/>
    <property type="project" value="UniProtKB-SubCell"/>
</dbReference>
<dbReference type="GO" id="GO:0003700">
    <property type="term" value="F:DNA-binding transcription factor activity"/>
    <property type="evidence" value="ECO:0007669"/>
    <property type="project" value="TreeGrafter"/>
</dbReference>
<dbReference type="GO" id="GO:0000976">
    <property type="term" value="F:transcription cis-regulatory region binding"/>
    <property type="evidence" value="ECO:0007669"/>
    <property type="project" value="TreeGrafter"/>
</dbReference>
<dbReference type="CDD" id="cd06303">
    <property type="entry name" value="PBP1_LuxPQ_Quorum_Sensing"/>
    <property type="match status" value="1"/>
</dbReference>
<dbReference type="Gene3D" id="3.40.50.2300">
    <property type="match status" value="2"/>
</dbReference>
<dbReference type="InterPro" id="IPR028082">
    <property type="entry name" value="Peripla_BP_I"/>
</dbReference>
<dbReference type="InterPro" id="IPR025997">
    <property type="entry name" value="SBP_2_dom"/>
</dbReference>
<dbReference type="PANTHER" id="PTHR30146">
    <property type="entry name" value="LACI-RELATED TRANSCRIPTIONAL REPRESSOR"/>
    <property type="match status" value="1"/>
</dbReference>
<dbReference type="PANTHER" id="PTHR30146:SF145">
    <property type="entry name" value="RIBOSE OPERON REPRESSOR"/>
    <property type="match status" value="1"/>
</dbReference>
<dbReference type="Pfam" id="PF13407">
    <property type="entry name" value="Peripla_BP_4"/>
    <property type="match status" value="1"/>
</dbReference>
<dbReference type="SUPFAM" id="SSF53822">
    <property type="entry name" value="Periplasmic binding protein-like I"/>
    <property type="match status" value="1"/>
</dbReference>
<proteinExistence type="evidence at protein level"/>
<name>LUXP_VIBHA</name>
<protein>
    <recommendedName>
        <fullName>Autoinducer 2-binding periplasmic protein LuxP</fullName>
    </recommendedName>
</protein>
<comment type="function">
    <text evidence="1">Binds to the signaling molecule autoinducer 2 (AI-2), a furanosyl borate diester, (3a-methyl-5,6-dihydrofuro-[2,3d][1,3,2]dioxaborole-2,2,6,6a-tetraol). This complex then interacts with the LuxQ sensor protein.</text>
</comment>
<comment type="interaction">
    <interactant intactId="EBI-1101482">
        <id>P54300</id>
    </interactant>
    <interactant intactId="EBI-1101486">
        <id>P54302</id>
        <label>luxQ</label>
    </interactant>
    <organismsDiffer>false</organismsDiffer>
    <experiments>5</experiments>
</comment>
<comment type="subcellular location">
    <subcellularLocation>
        <location evidence="2">Periplasm</location>
    </subcellularLocation>
</comment>
<comment type="similarity">
    <text evidence="2">Belongs to the bacterial solute-binding protein 2 family.</text>
</comment>
<gene>
    <name type="primary">luxP</name>
</gene>
<organism>
    <name type="scientific">Vibrio harveyi</name>
    <name type="common">Beneckea harveyi</name>
    <dbReference type="NCBI Taxonomy" id="669"/>
    <lineage>
        <taxon>Bacteria</taxon>
        <taxon>Pseudomonadati</taxon>
        <taxon>Pseudomonadota</taxon>
        <taxon>Gammaproteobacteria</taxon>
        <taxon>Vibrionales</taxon>
        <taxon>Vibrionaceae</taxon>
        <taxon>Vibrio</taxon>
    </lineage>
</organism>
<evidence type="ECO:0000269" key="1">
    <source>
    </source>
</evidence>
<evidence type="ECO:0000305" key="2"/>
<evidence type="ECO:0007829" key="3">
    <source>
        <dbReference type="PDB" id="1JX6"/>
    </source>
</evidence>
<evidence type="ECO:0007829" key="4">
    <source>
        <dbReference type="PDB" id="4YP9"/>
    </source>
</evidence>
<feature type="signal peptide">
    <location>
        <begin position="1"/>
        <end position="23"/>
    </location>
</feature>
<feature type="chain" id="PRO_0000031726" description="Autoinducer 2-binding periplasmic protein LuxP">
    <location>
        <begin position="24"/>
        <end position="365"/>
    </location>
</feature>
<feature type="strand" evidence="4">
    <location>
        <begin position="25"/>
        <end position="28"/>
    </location>
</feature>
<feature type="helix" evidence="3">
    <location>
        <begin position="31"/>
        <end position="37"/>
    </location>
</feature>
<feature type="helix" evidence="3">
    <location>
        <begin position="39"/>
        <end position="53"/>
    </location>
</feature>
<feature type="strand" evidence="3">
    <location>
        <begin position="67"/>
        <end position="73"/>
    </location>
</feature>
<feature type="helix" evidence="3">
    <location>
        <begin position="81"/>
        <end position="95"/>
    </location>
</feature>
<feature type="strand" evidence="3">
    <location>
        <begin position="100"/>
        <end position="106"/>
    </location>
</feature>
<feature type="helix" evidence="3">
    <location>
        <begin position="113"/>
        <end position="125"/>
    </location>
</feature>
<feature type="strand" evidence="3">
    <location>
        <begin position="129"/>
        <end position="133"/>
    </location>
</feature>
<feature type="strand" evidence="3">
    <location>
        <begin position="136"/>
        <end position="138"/>
    </location>
</feature>
<feature type="helix" evidence="3">
    <location>
        <begin position="141"/>
        <end position="150"/>
    </location>
</feature>
<feature type="strand" evidence="3">
    <location>
        <begin position="154"/>
        <end position="158"/>
    </location>
</feature>
<feature type="helix" evidence="3">
    <location>
        <begin position="165"/>
        <end position="167"/>
    </location>
</feature>
<feature type="strand" evidence="4">
    <location>
        <begin position="168"/>
        <end position="170"/>
    </location>
</feature>
<feature type="strand" evidence="3">
    <location>
        <begin position="173"/>
        <end position="177"/>
    </location>
</feature>
<feature type="helix" evidence="3">
    <location>
        <begin position="180"/>
        <end position="194"/>
    </location>
</feature>
<feature type="strand" evidence="3">
    <location>
        <begin position="200"/>
        <end position="204"/>
    </location>
</feature>
<feature type="strand" evidence="4">
    <location>
        <begin position="207"/>
        <end position="209"/>
    </location>
</feature>
<feature type="helix" evidence="3">
    <location>
        <begin position="210"/>
        <end position="227"/>
    </location>
</feature>
<feature type="strand" evidence="3">
    <location>
        <begin position="230"/>
        <end position="235"/>
    </location>
</feature>
<feature type="helix" evidence="3">
    <location>
        <begin position="241"/>
        <end position="254"/>
    </location>
</feature>
<feature type="strand" evidence="3">
    <location>
        <begin position="259"/>
        <end position="265"/>
    </location>
</feature>
<feature type="helix" evidence="3">
    <location>
        <begin position="266"/>
        <end position="279"/>
    </location>
</feature>
<feature type="strand" evidence="3">
    <location>
        <begin position="284"/>
        <end position="287"/>
    </location>
</feature>
<feature type="helix" evidence="3">
    <location>
        <begin position="293"/>
        <end position="300"/>
    </location>
</feature>
<feature type="strand" evidence="3">
    <location>
        <begin position="306"/>
        <end position="310"/>
    </location>
</feature>
<feature type="helix" evidence="3">
    <location>
        <begin position="313"/>
        <end position="327"/>
    </location>
</feature>
<feature type="strand" evidence="3">
    <location>
        <begin position="334"/>
        <end position="337"/>
    </location>
</feature>
<feature type="strand" evidence="3">
    <location>
        <begin position="340"/>
        <end position="344"/>
    </location>
</feature>
<feature type="helix" evidence="3">
    <location>
        <begin position="349"/>
        <end position="359"/>
    </location>
</feature>
<feature type="turn" evidence="3">
    <location>
        <begin position="360"/>
        <end position="363"/>
    </location>
</feature>